<accession>A1ATU1</accession>
<proteinExistence type="inferred from homology"/>
<reference key="1">
    <citation type="submission" date="2006-10" db="EMBL/GenBank/DDBJ databases">
        <title>Complete sequence of chromosome of Pelobacter propionicus DSM 2379.</title>
        <authorList>
            <consortium name="US DOE Joint Genome Institute"/>
            <person name="Copeland A."/>
            <person name="Lucas S."/>
            <person name="Lapidus A."/>
            <person name="Barry K."/>
            <person name="Detter J.C."/>
            <person name="Glavina del Rio T."/>
            <person name="Hammon N."/>
            <person name="Israni S."/>
            <person name="Dalin E."/>
            <person name="Tice H."/>
            <person name="Pitluck S."/>
            <person name="Saunders E."/>
            <person name="Brettin T."/>
            <person name="Bruce D."/>
            <person name="Han C."/>
            <person name="Tapia R."/>
            <person name="Schmutz J."/>
            <person name="Larimer F."/>
            <person name="Land M."/>
            <person name="Hauser L."/>
            <person name="Kyrpides N."/>
            <person name="Kim E."/>
            <person name="Lovley D."/>
            <person name="Richardson P."/>
        </authorList>
    </citation>
    <scope>NUCLEOTIDE SEQUENCE [LARGE SCALE GENOMIC DNA]</scope>
    <source>
        <strain>DSM 2379 / NBRC 103807 / OttBd1</strain>
    </source>
</reference>
<dbReference type="EC" id="4.3.2.1" evidence="1"/>
<dbReference type="EMBL" id="CP000482">
    <property type="protein sequence ID" value="ABL00762.1"/>
    <property type="molecule type" value="Genomic_DNA"/>
</dbReference>
<dbReference type="RefSeq" id="WP_011736993.1">
    <property type="nucleotide sequence ID" value="NC_008609.1"/>
</dbReference>
<dbReference type="SMR" id="A1ATU1"/>
<dbReference type="STRING" id="338966.Ppro_3168"/>
<dbReference type="KEGG" id="ppd:Ppro_3168"/>
<dbReference type="eggNOG" id="COG0165">
    <property type="taxonomic scope" value="Bacteria"/>
</dbReference>
<dbReference type="HOGENOM" id="CLU_027272_2_3_7"/>
<dbReference type="OrthoDB" id="9769623at2"/>
<dbReference type="UniPathway" id="UPA00068">
    <property type="reaction ID" value="UER00114"/>
</dbReference>
<dbReference type="Proteomes" id="UP000006732">
    <property type="component" value="Chromosome"/>
</dbReference>
<dbReference type="GO" id="GO:0005829">
    <property type="term" value="C:cytosol"/>
    <property type="evidence" value="ECO:0007669"/>
    <property type="project" value="TreeGrafter"/>
</dbReference>
<dbReference type="GO" id="GO:0004056">
    <property type="term" value="F:argininosuccinate lyase activity"/>
    <property type="evidence" value="ECO:0007669"/>
    <property type="project" value="UniProtKB-UniRule"/>
</dbReference>
<dbReference type="GO" id="GO:0042450">
    <property type="term" value="P:arginine biosynthetic process via ornithine"/>
    <property type="evidence" value="ECO:0007669"/>
    <property type="project" value="InterPro"/>
</dbReference>
<dbReference type="GO" id="GO:0006526">
    <property type="term" value="P:L-arginine biosynthetic process"/>
    <property type="evidence" value="ECO:0007669"/>
    <property type="project" value="UniProtKB-UniRule"/>
</dbReference>
<dbReference type="CDD" id="cd01359">
    <property type="entry name" value="Argininosuccinate_lyase"/>
    <property type="match status" value="1"/>
</dbReference>
<dbReference type="FunFam" id="1.10.275.10:FF:000002">
    <property type="entry name" value="Argininosuccinate lyase"/>
    <property type="match status" value="1"/>
</dbReference>
<dbReference type="FunFam" id="1.10.40.30:FF:000001">
    <property type="entry name" value="Argininosuccinate lyase"/>
    <property type="match status" value="1"/>
</dbReference>
<dbReference type="FunFam" id="1.20.200.10:FF:000002">
    <property type="entry name" value="Argininosuccinate lyase"/>
    <property type="match status" value="1"/>
</dbReference>
<dbReference type="Gene3D" id="1.10.40.30">
    <property type="entry name" value="Fumarase/aspartase (C-terminal domain)"/>
    <property type="match status" value="1"/>
</dbReference>
<dbReference type="Gene3D" id="1.20.200.10">
    <property type="entry name" value="Fumarase/aspartase (Central domain)"/>
    <property type="match status" value="1"/>
</dbReference>
<dbReference type="Gene3D" id="1.10.275.10">
    <property type="entry name" value="Fumarase/aspartase (N-terminal domain)"/>
    <property type="match status" value="1"/>
</dbReference>
<dbReference type="HAMAP" id="MF_00006">
    <property type="entry name" value="Arg_succ_lyase"/>
    <property type="match status" value="1"/>
</dbReference>
<dbReference type="InterPro" id="IPR029419">
    <property type="entry name" value="Arg_succ_lyase_C"/>
</dbReference>
<dbReference type="InterPro" id="IPR009049">
    <property type="entry name" value="Argininosuccinate_lyase"/>
</dbReference>
<dbReference type="InterPro" id="IPR024083">
    <property type="entry name" value="Fumarase/histidase_N"/>
</dbReference>
<dbReference type="InterPro" id="IPR020557">
    <property type="entry name" value="Fumarate_lyase_CS"/>
</dbReference>
<dbReference type="InterPro" id="IPR000362">
    <property type="entry name" value="Fumarate_lyase_fam"/>
</dbReference>
<dbReference type="InterPro" id="IPR022761">
    <property type="entry name" value="Fumarate_lyase_N"/>
</dbReference>
<dbReference type="InterPro" id="IPR008948">
    <property type="entry name" value="L-Aspartase-like"/>
</dbReference>
<dbReference type="NCBIfam" id="TIGR00838">
    <property type="entry name" value="argH"/>
    <property type="match status" value="1"/>
</dbReference>
<dbReference type="PANTHER" id="PTHR43814">
    <property type="entry name" value="ARGININOSUCCINATE LYASE"/>
    <property type="match status" value="1"/>
</dbReference>
<dbReference type="PANTHER" id="PTHR43814:SF1">
    <property type="entry name" value="ARGININOSUCCINATE LYASE"/>
    <property type="match status" value="1"/>
</dbReference>
<dbReference type="Pfam" id="PF14698">
    <property type="entry name" value="ASL_C2"/>
    <property type="match status" value="1"/>
</dbReference>
<dbReference type="Pfam" id="PF00206">
    <property type="entry name" value="Lyase_1"/>
    <property type="match status" value="1"/>
</dbReference>
<dbReference type="PRINTS" id="PR00145">
    <property type="entry name" value="ARGSUCLYASE"/>
</dbReference>
<dbReference type="PRINTS" id="PR00149">
    <property type="entry name" value="FUMRATELYASE"/>
</dbReference>
<dbReference type="SUPFAM" id="SSF48557">
    <property type="entry name" value="L-aspartase-like"/>
    <property type="match status" value="1"/>
</dbReference>
<dbReference type="PROSITE" id="PS00163">
    <property type="entry name" value="FUMARATE_LYASES"/>
    <property type="match status" value="1"/>
</dbReference>
<protein>
    <recommendedName>
        <fullName evidence="1">Argininosuccinate lyase</fullName>
        <shortName evidence="1">ASAL</shortName>
        <ecNumber evidence="1">4.3.2.1</ecNumber>
    </recommendedName>
    <alternativeName>
        <fullName evidence="1">Arginosuccinase</fullName>
    </alternativeName>
</protein>
<feature type="chain" id="PRO_1000000517" description="Argininosuccinate lyase">
    <location>
        <begin position="1"/>
        <end position="458"/>
    </location>
</feature>
<name>ARLY_PELPD</name>
<evidence type="ECO:0000255" key="1">
    <source>
        <dbReference type="HAMAP-Rule" id="MF_00006"/>
    </source>
</evidence>
<organism>
    <name type="scientific">Pelobacter propionicus (strain DSM 2379 / NBRC 103807 / OttBd1)</name>
    <dbReference type="NCBI Taxonomy" id="338966"/>
    <lineage>
        <taxon>Bacteria</taxon>
        <taxon>Pseudomonadati</taxon>
        <taxon>Thermodesulfobacteriota</taxon>
        <taxon>Desulfuromonadia</taxon>
        <taxon>Desulfuromonadales</taxon>
        <taxon>Desulfuromonadaceae</taxon>
        <taxon>Pelobacter</taxon>
    </lineage>
</organism>
<comment type="catalytic activity">
    <reaction evidence="1">
        <text>2-(N(omega)-L-arginino)succinate = fumarate + L-arginine</text>
        <dbReference type="Rhea" id="RHEA:24020"/>
        <dbReference type="ChEBI" id="CHEBI:29806"/>
        <dbReference type="ChEBI" id="CHEBI:32682"/>
        <dbReference type="ChEBI" id="CHEBI:57472"/>
        <dbReference type="EC" id="4.3.2.1"/>
    </reaction>
</comment>
<comment type="pathway">
    <text evidence="1">Amino-acid biosynthesis; L-arginine biosynthesis; L-arginine from L-ornithine and carbamoyl phosphate: step 3/3.</text>
</comment>
<comment type="subcellular location">
    <subcellularLocation>
        <location evidence="1">Cytoplasm</location>
    </subcellularLocation>
</comment>
<comment type="similarity">
    <text evidence="1">Belongs to the lyase 1 family. Argininosuccinate lyase subfamily.</text>
</comment>
<sequence>MSKDKLWGGRFTQPTDAFVEEFTASIQFDKRLYHQDIRGSIAHARMLGKQGIIPQADVEAIVEGLQQILLQIEEGSFDFSISLEDIHMNIESRLSARIGEAGKRLHTGRSRNDQVALDIRLYLRDEIVEITSYIDLLIDALLTQAEENVDVVMPGFTHLQTAQPILFAHHMLAYVEMFKRDSGRMEDCLKRVNVLPLGAGALAGTTFPIDRDYVAEQLGFPAITRNSLDSVSDRDFALEFISASSILMMHLSRLSEELILWSTSQFKFIELSDGFCTGSSIMPQKKNPDVPELVRGKTGRVYGNLMALLTVMKSLPLAYNKDMQEDKEPLFDTIDTVKGSLKVFSDMIREMSIYPEAMGRAAGQGFSTATDVADYLVRKGVAFRDAHEAVGKAVAYCVENEMELTDLTLTEWELFSPRFEQDIFEAITVDACIDARNVPGGTAREQVKGEIARCRKGK</sequence>
<gene>
    <name evidence="1" type="primary">argH</name>
    <name type="ordered locus">Ppro_3168</name>
</gene>
<keyword id="KW-0028">Amino-acid biosynthesis</keyword>
<keyword id="KW-0055">Arginine biosynthesis</keyword>
<keyword id="KW-0963">Cytoplasm</keyword>
<keyword id="KW-0456">Lyase</keyword>
<keyword id="KW-1185">Reference proteome</keyword>